<organism>
    <name type="scientific">Neisseria gonorrhoeae</name>
    <dbReference type="NCBI Taxonomy" id="485"/>
    <lineage>
        <taxon>Bacteria</taxon>
        <taxon>Pseudomonadati</taxon>
        <taxon>Pseudomonadota</taxon>
        <taxon>Betaproteobacteria</taxon>
        <taxon>Neisseriales</taxon>
        <taxon>Neisseriaceae</taxon>
        <taxon>Neisseria</taxon>
    </lineage>
</organism>
<evidence type="ECO:0000255" key="1">
    <source>
        <dbReference type="PROSITE-ProRule" id="PRU00977"/>
    </source>
</evidence>
<evidence type="ECO:0000305" key="2"/>
<sequence>MNASNWSVYLILCENSAFYCGISPNPQQRLAIHTAGKGAKYTRVFKPVAMRIVAGGMDKGTALKQEIAVKKLTAAQKRQLWEQAEKMPSET</sequence>
<comment type="similarity">
    <text evidence="2">Belongs to the UPF0213 family.</text>
</comment>
<dbReference type="EMBL" id="U82701">
    <property type="protein sequence ID" value="AAC44904.1"/>
    <property type="molecule type" value="Genomic_DNA"/>
</dbReference>
<dbReference type="RefSeq" id="WP_003693497.1">
    <property type="nucleotide sequence ID" value="NZ_WHPL01000002.1"/>
</dbReference>
<dbReference type="SMR" id="P95364"/>
<dbReference type="CDD" id="cd10456">
    <property type="entry name" value="GIY-YIG_UPF0213"/>
    <property type="match status" value="1"/>
</dbReference>
<dbReference type="Gene3D" id="3.40.1440.10">
    <property type="entry name" value="GIY-YIG endonuclease"/>
    <property type="match status" value="1"/>
</dbReference>
<dbReference type="InterPro" id="IPR000305">
    <property type="entry name" value="GIY-YIG_endonuc"/>
</dbReference>
<dbReference type="InterPro" id="IPR035901">
    <property type="entry name" value="GIY-YIG_endonuc_sf"/>
</dbReference>
<dbReference type="InterPro" id="IPR050190">
    <property type="entry name" value="UPF0213_domain"/>
</dbReference>
<dbReference type="PANTHER" id="PTHR34477">
    <property type="entry name" value="UPF0213 PROTEIN YHBQ"/>
    <property type="match status" value="1"/>
</dbReference>
<dbReference type="PANTHER" id="PTHR34477:SF1">
    <property type="entry name" value="UPF0213 PROTEIN YHBQ"/>
    <property type="match status" value="1"/>
</dbReference>
<dbReference type="Pfam" id="PF01541">
    <property type="entry name" value="GIY-YIG"/>
    <property type="match status" value="1"/>
</dbReference>
<dbReference type="SUPFAM" id="SSF82771">
    <property type="entry name" value="GIY-YIG endonuclease"/>
    <property type="match status" value="1"/>
</dbReference>
<dbReference type="PROSITE" id="PS50164">
    <property type="entry name" value="GIY_YIG"/>
    <property type="match status" value="1"/>
</dbReference>
<feature type="chain" id="PRO_0000161369" description="UPF0213 protein in glnA 3'region">
    <location>
        <begin position="1"/>
        <end position="91"/>
    </location>
</feature>
<feature type="domain" description="GIY-YIG" evidence="1">
    <location>
        <begin position="4"/>
        <end position="83"/>
    </location>
</feature>
<reference key="1">
    <citation type="journal article" date="1997" name="Mol. Microbiol.">
        <title>Interspecies recombination, and phylogenetic distortions, within the glutamine synthetase and shikimate dehydrogenase genes of Neisseria meningitidis and commensal Neisseria species.</title>
        <authorList>
            <person name="Zhou J."/>
            <person name="Bowler L.D."/>
            <person name="Spratt B.G."/>
        </authorList>
    </citation>
    <scope>NUCLEOTIDE SEQUENCE [GENOMIC DNA]</scope>
    <source>
        <strain>MS11</strain>
    </source>
</reference>
<protein>
    <recommendedName>
        <fullName>UPF0213 protein in glnA 3'region</fullName>
    </recommendedName>
    <alternativeName>
        <fullName>orfZ</fullName>
    </alternativeName>
</protein>
<proteinExistence type="inferred from homology"/>
<name>YORZ_NEIGO</name>
<accession>P95364</accession>